<name>ARCA_MYCMM</name>
<comment type="catalytic activity">
    <reaction evidence="1">
        <text>L-arginine + H2O = L-citrulline + NH4(+)</text>
        <dbReference type="Rhea" id="RHEA:19597"/>
        <dbReference type="ChEBI" id="CHEBI:15377"/>
        <dbReference type="ChEBI" id="CHEBI:28938"/>
        <dbReference type="ChEBI" id="CHEBI:32682"/>
        <dbReference type="ChEBI" id="CHEBI:57743"/>
        <dbReference type="EC" id="3.5.3.6"/>
    </reaction>
</comment>
<comment type="pathway">
    <text evidence="1">Amino-acid degradation; L-arginine degradation via ADI pathway; carbamoyl phosphate from L-arginine: step 1/2.</text>
</comment>
<comment type="subcellular location">
    <subcellularLocation>
        <location evidence="1">Cytoplasm</location>
    </subcellularLocation>
</comment>
<comment type="similarity">
    <text evidence="1">Belongs to the arginine deiminase family.</text>
</comment>
<gene>
    <name evidence="1" type="primary">arcA</name>
    <name type="ordered locus">MMAR_4492</name>
</gene>
<reference key="1">
    <citation type="journal article" date="2008" name="Genome Res.">
        <title>Insights from the complete genome sequence of Mycobacterium marinum on the evolution of Mycobacterium tuberculosis.</title>
        <authorList>
            <person name="Stinear T.P."/>
            <person name="Seemann T."/>
            <person name="Harrison P.F."/>
            <person name="Jenkin G.A."/>
            <person name="Davies J.K."/>
            <person name="Johnson P.D."/>
            <person name="Abdellah Z."/>
            <person name="Arrowsmith C."/>
            <person name="Chillingworth T."/>
            <person name="Churcher C."/>
            <person name="Clarke K."/>
            <person name="Cronin A."/>
            <person name="Davis P."/>
            <person name="Goodhead I."/>
            <person name="Holroyd N."/>
            <person name="Jagels K."/>
            <person name="Lord A."/>
            <person name="Moule S."/>
            <person name="Mungall K."/>
            <person name="Norbertczak H."/>
            <person name="Quail M.A."/>
            <person name="Rabbinowitsch E."/>
            <person name="Walker D."/>
            <person name="White B."/>
            <person name="Whitehead S."/>
            <person name="Small P.L."/>
            <person name="Brosch R."/>
            <person name="Ramakrishnan L."/>
            <person name="Fischbach M.A."/>
            <person name="Parkhill J."/>
            <person name="Cole S.T."/>
        </authorList>
    </citation>
    <scope>NUCLEOTIDE SEQUENCE [LARGE SCALE GENOMIC DNA]</scope>
    <source>
        <strain>ATCC BAA-535 / M</strain>
    </source>
</reference>
<evidence type="ECO:0000255" key="1">
    <source>
        <dbReference type="HAMAP-Rule" id="MF_00242"/>
    </source>
</evidence>
<sequence>MVDELGSNSEVGTLKVVILHRPGTELRRLTPRNTDQLLFDGLPWVSRAQEEHDQFAELLRSRGVEVLLLSELLTEALHSGAARMQGVAAAVDSRRLGIPLAQELSAYLRGLDPVRLSHVLTAGMTFNELPADARTDVSLVVRMHHDADFVIEPLPNLLFTRDSSIWIGPRFVIPSLAMRARVREASLTDIIYAHHPRFTGIRRAYESRTAPVEGGDVLLLAPGVVAVGVGERTTPAGAEALARSLFDDDLAHTVLAVPIAQRRAQMHLDTVCTMVDVDKVVMYANVVDELTAFTIERQPDGVTISDAAPFVEAAARAMGIEKLQVIGTGIDPVVAEREQWDDGNNTLALAPGVVVAYERNAQTNARLEAAGIEVLTIGGSELGTGRGGPRCMSCPVARDPLP</sequence>
<feature type="chain" id="PRO_1000100741" description="Arginine deiminase">
    <location>
        <begin position="1"/>
        <end position="402"/>
    </location>
</feature>
<feature type="active site" description="Amidino-cysteine intermediate" evidence="1">
    <location>
        <position position="391"/>
    </location>
</feature>
<organism>
    <name type="scientific">Mycobacterium marinum (strain ATCC BAA-535 / M)</name>
    <dbReference type="NCBI Taxonomy" id="216594"/>
    <lineage>
        <taxon>Bacteria</taxon>
        <taxon>Bacillati</taxon>
        <taxon>Actinomycetota</taxon>
        <taxon>Actinomycetes</taxon>
        <taxon>Mycobacteriales</taxon>
        <taxon>Mycobacteriaceae</taxon>
        <taxon>Mycobacterium</taxon>
        <taxon>Mycobacterium ulcerans group</taxon>
    </lineage>
</organism>
<accession>B2HDL4</accession>
<protein>
    <recommendedName>
        <fullName evidence="1">Arginine deiminase</fullName>
        <shortName evidence="1">ADI</shortName>
        <ecNumber evidence="1">3.5.3.6</ecNumber>
    </recommendedName>
    <alternativeName>
        <fullName evidence="1">Arginine dihydrolase</fullName>
        <shortName evidence="1">AD</shortName>
    </alternativeName>
</protein>
<keyword id="KW-0056">Arginine metabolism</keyword>
<keyword id="KW-0963">Cytoplasm</keyword>
<keyword id="KW-0378">Hydrolase</keyword>
<keyword id="KW-1185">Reference proteome</keyword>
<proteinExistence type="inferred from homology"/>
<dbReference type="EC" id="3.5.3.6" evidence="1"/>
<dbReference type="EMBL" id="CP000854">
    <property type="protein sequence ID" value="ACC42898.1"/>
    <property type="molecule type" value="Genomic_DNA"/>
</dbReference>
<dbReference type="RefSeq" id="WP_012396044.1">
    <property type="nucleotide sequence ID" value="NC_010612.1"/>
</dbReference>
<dbReference type="SMR" id="B2HDL4"/>
<dbReference type="STRING" id="216594.MMAR_4492"/>
<dbReference type="KEGG" id="mmi:MMAR_4492"/>
<dbReference type="eggNOG" id="COG2235">
    <property type="taxonomic scope" value="Bacteria"/>
</dbReference>
<dbReference type="HOGENOM" id="CLU_052662_0_1_11"/>
<dbReference type="OrthoDB" id="9807502at2"/>
<dbReference type="UniPathway" id="UPA00254">
    <property type="reaction ID" value="UER00364"/>
</dbReference>
<dbReference type="Proteomes" id="UP000001190">
    <property type="component" value="Chromosome"/>
</dbReference>
<dbReference type="GO" id="GO:0005737">
    <property type="term" value="C:cytoplasm"/>
    <property type="evidence" value="ECO:0007669"/>
    <property type="project" value="UniProtKB-SubCell"/>
</dbReference>
<dbReference type="GO" id="GO:0016990">
    <property type="term" value="F:arginine deiminase activity"/>
    <property type="evidence" value="ECO:0007669"/>
    <property type="project" value="UniProtKB-UniRule"/>
</dbReference>
<dbReference type="GO" id="GO:0019547">
    <property type="term" value="P:arginine catabolic process to ornithine"/>
    <property type="evidence" value="ECO:0007669"/>
    <property type="project" value="UniProtKB-UniRule"/>
</dbReference>
<dbReference type="GO" id="GO:0019546">
    <property type="term" value="P:arginine deiminase pathway"/>
    <property type="evidence" value="ECO:0007669"/>
    <property type="project" value="TreeGrafter"/>
</dbReference>
<dbReference type="Gene3D" id="1.10.3930.10">
    <property type="entry name" value="Arginine deiminase"/>
    <property type="match status" value="1"/>
</dbReference>
<dbReference type="Gene3D" id="3.75.10.10">
    <property type="entry name" value="L-arginine/glycine Amidinotransferase, Chain A"/>
    <property type="match status" value="1"/>
</dbReference>
<dbReference type="HAMAP" id="MF_00242">
    <property type="entry name" value="Arg_deiminase"/>
    <property type="match status" value="1"/>
</dbReference>
<dbReference type="InterPro" id="IPR003876">
    <property type="entry name" value="Arg_deiminase"/>
</dbReference>
<dbReference type="NCBIfam" id="TIGR01078">
    <property type="entry name" value="arcA"/>
    <property type="match status" value="1"/>
</dbReference>
<dbReference type="NCBIfam" id="NF002381">
    <property type="entry name" value="PRK01388.1"/>
    <property type="match status" value="1"/>
</dbReference>
<dbReference type="PANTHER" id="PTHR47271">
    <property type="entry name" value="ARGININE DEIMINASE"/>
    <property type="match status" value="1"/>
</dbReference>
<dbReference type="PANTHER" id="PTHR47271:SF2">
    <property type="entry name" value="ARGININE DEIMINASE"/>
    <property type="match status" value="1"/>
</dbReference>
<dbReference type="Pfam" id="PF02274">
    <property type="entry name" value="ADI"/>
    <property type="match status" value="1"/>
</dbReference>
<dbReference type="PIRSF" id="PIRSF006356">
    <property type="entry name" value="Arg_deiminase"/>
    <property type="match status" value="1"/>
</dbReference>
<dbReference type="PRINTS" id="PR01466">
    <property type="entry name" value="ARGDEIMINASE"/>
</dbReference>
<dbReference type="SUPFAM" id="SSF55909">
    <property type="entry name" value="Pentein"/>
    <property type="match status" value="1"/>
</dbReference>